<evidence type="ECO:0000255" key="1">
    <source>
        <dbReference type="HAMAP-Rule" id="MF_00622"/>
    </source>
</evidence>
<name>RRP42_SULTO</name>
<organism>
    <name type="scientific">Sulfurisphaera tokodaii (strain DSM 16993 / JCM 10545 / NBRC 100140 / 7)</name>
    <name type="common">Sulfolobus tokodaii</name>
    <dbReference type="NCBI Taxonomy" id="273063"/>
    <lineage>
        <taxon>Archaea</taxon>
        <taxon>Thermoproteota</taxon>
        <taxon>Thermoprotei</taxon>
        <taxon>Sulfolobales</taxon>
        <taxon>Sulfolobaceae</taxon>
        <taxon>Sulfurisphaera</taxon>
    </lineage>
</organism>
<comment type="function">
    <text evidence="1">Non-catalytic component of the exosome, which is a complex involved in RNA degradation. Contributes to the structuring of the Rrp41 active site.</text>
</comment>
<comment type="subunit">
    <text evidence="1">Component of the archaeal exosome complex. Forms a hexameric ring-like arrangement composed of 3 Rrp41-Rrp42 heterodimers. The hexameric ring associates with a trimer of Rrp4 and/or Csl4 subunits.</text>
</comment>
<comment type="subcellular location">
    <subcellularLocation>
        <location evidence="1">Cytoplasm</location>
    </subcellularLocation>
</comment>
<comment type="similarity">
    <text evidence="1">Belongs to the RNase PH family. Rrp42 subfamily.</text>
</comment>
<gene>
    <name evidence="1" type="primary">rrp42</name>
    <name type="ordered locus">STK_04420</name>
</gene>
<reference key="1">
    <citation type="journal article" date="2001" name="DNA Res.">
        <title>Complete genome sequence of an aerobic thermoacidophilic Crenarchaeon, Sulfolobus tokodaii strain7.</title>
        <authorList>
            <person name="Kawarabayasi Y."/>
            <person name="Hino Y."/>
            <person name="Horikawa H."/>
            <person name="Jin-no K."/>
            <person name="Takahashi M."/>
            <person name="Sekine M."/>
            <person name="Baba S."/>
            <person name="Ankai A."/>
            <person name="Kosugi H."/>
            <person name="Hosoyama A."/>
            <person name="Fukui S."/>
            <person name="Nagai Y."/>
            <person name="Nishijima K."/>
            <person name="Otsuka R."/>
            <person name="Nakazawa H."/>
            <person name="Takamiya M."/>
            <person name="Kato Y."/>
            <person name="Yoshizawa T."/>
            <person name="Tanaka T."/>
            <person name="Kudoh Y."/>
            <person name="Yamazaki J."/>
            <person name="Kushida N."/>
            <person name="Oguchi A."/>
            <person name="Aoki K."/>
            <person name="Masuda S."/>
            <person name="Yanagii M."/>
            <person name="Nishimura M."/>
            <person name="Yamagishi A."/>
            <person name="Oshima T."/>
            <person name="Kikuchi H."/>
        </authorList>
    </citation>
    <scope>NUCLEOTIDE SEQUENCE [LARGE SCALE GENOMIC DNA]</scope>
    <source>
        <strain>DSM 16993 / JCM 10545 / NBRC 100140 / 7</strain>
    </source>
</reference>
<dbReference type="EMBL" id="BA000023">
    <property type="protein sequence ID" value="BAK54286.1"/>
    <property type="molecule type" value="Genomic_DNA"/>
</dbReference>
<dbReference type="RefSeq" id="WP_010978415.1">
    <property type="nucleotide sequence ID" value="NC_003106.2"/>
</dbReference>
<dbReference type="SMR" id="Q975G9"/>
<dbReference type="STRING" id="273063.STK_04420"/>
<dbReference type="GeneID" id="1458379"/>
<dbReference type="KEGG" id="sto:STK_04420"/>
<dbReference type="PATRIC" id="fig|273063.9.peg.514"/>
<dbReference type="eggNOG" id="arCOG01574">
    <property type="taxonomic scope" value="Archaea"/>
</dbReference>
<dbReference type="OrthoDB" id="30932at2157"/>
<dbReference type="Proteomes" id="UP000001015">
    <property type="component" value="Chromosome"/>
</dbReference>
<dbReference type="GO" id="GO:0000177">
    <property type="term" value="C:cytoplasmic exosome (RNase complex)"/>
    <property type="evidence" value="ECO:0007669"/>
    <property type="project" value="TreeGrafter"/>
</dbReference>
<dbReference type="GO" id="GO:0035925">
    <property type="term" value="F:mRNA 3'-UTR AU-rich region binding"/>
    <property type="evidence" value="ECO:0007669"/>
    <property type="project" value="TreeGrafter"/>
</dbReference>
<dbReference type="GO" id="GO:0016075">
    <property type="term" value="P:rRNA catabolic process"/>
    <property type="evidence" value="ECO:0007669"/>
    <property type="project" value="TreeGrafter"/>
</dbReference>
<dbReference type="CDD" id="cd11365">
    <property type="entry name" value="RNase_PH_archRRP42"/>
    <property type="match status" value="1"/>
</dbReference>
<dbReference type="FunFam" id="3.30.230.70:FF:000017">
    <property type="entry name" value="Exosome complex component Rrp42"/>
    <property type="match status" value="1"/>
</dbReference>
<dbReference type="Gene3D" id="3.30.230.70">
    <property type="entry name" value="GHMP Kinase, N-terminal domain"/>
    <property type="match status" value="1"/>
</dbReference>
<dbReference type="HAMAP" id="MF_00622">
    <property type="entry name" value="Exosome_Rrp42"/>
    <property type="match status" value="1"/>
</dbReference>
<dbReference type="InterPro" id="IPR001247">
    <property type="entry name" value="ExoRNase_PH_dom1"/>
</dbReference>
<dbReference type="InterPro" id="IPR015847">
    <property type="entry name" value="ExoRNase_PH_dom2"/>
</dbReference>
<dbReference type="InterPro" id="IPR036345">
    <property type="entry name" value="ExoRNase_PH_dom2_sf"/>
</dbReference>
<dbReference type="InterPro" id="IPR050590">
    <property type="entry name" value="Exosome_comp_Rrp42_subfam"/>
</dbReference>
<dbReference type="InterPro" id="IPR027408">
    <property type="entry name" value="PNPase/RNase_PH_dom_sf"/>
</dbReference>
<dbReference type="InterPro" id="IPR020568">
    <property type="entry name" value="Ribosomal_Su5_D2-typ_SF"/>
</dbReference>
<dbReference type="InterPro" id="IPR020869">
    <property type="entry name" value="Rrp42_archaea"/>
</dbReference>
<dbReference type="NCBIfam" id="NF003282">
    <property type="entry name" value="PRK04282.1-1"/>
    <property type="match status" value="1"/>
</dbReference>
<dbReference type="PANTHER" id="PTHR11097:SF8">
    <property type="entry name" value="EXOSOME COMPLEX COMPONENT RRP42"/>
    <property type="match status" value="1"/>
</dbReference>
<dbReference type="PANTHER" id="PTHR11097">
    <property type="entry name" value="EXOSOME COMPLEX EXONUCLEASE RIBOSOMAL RNA PROCESSING PROTEIN"/>
    <property type="match status" value="1"/>
</dbReference>
<dbReference type="Pfam" id="PF01138">
    <property type="entry name" value="RNase_PH"/>
    <property type="match status" value="1"/>
</dbReference>
<dbReference type="Pfam" id="PF03725">
    <property type="entry name" value="RNase_PH_C"/>
    <property type="match status" value="1"/>
</dbReference>
<dbReference type="SUPFAM" id="SSF55666">
    <property type="entry name" value="Ribonuclease PH domain 2-like"/>
    <property type="match status" value="1"/>
</dbReference>
<dbReference type="SUPFAM" id="SSF54211">
    <property type="entry name" value="Ribosomal protein S5 domain 2-like"/>
    <property type="match status" value="1"/>
</dbReference>
<proteinExistence type="inferred from homology"/>
<feature type="chain" id="PRO_0000140007" description="Exosome complex component Rrp42">
    <location>
        <begin position="1"/>
        <end position="275"/>
    </location>
</feature>
<sequence length="275" mass="30139">MSITPSNQNITSLLKKESILNALERGIRLDGRKNSDYRPISVTLNYAKKAEGSALVKLGDTMVLAGVKLEEEEPFPDTPNQGNLVVNVELLPLAYETFEPGPPDENAIELARVVDRSLRDSKAVDLSKLVIIPGKKVWTAWVDVYVLDYGGNVLDACTLAAVAALYNTKLPKVEIEGDNVKIIKEEKTDVTPIAYPVVTVTVAKIGKYLVVDPSLDEESIADVKISFSYVQDGRIVGMQKSNFGSLSLQEVDVAESLARSASQKLFEELKKQINM</sequence>
<protein>
    <recommendedName>
        <fullName evidence="1">Exosome complex component Rrp42</fullName>
    </recommendedName>
</protein>
<keyword id="KW-0963">Cytoplasm</keyword>
<keyword id="KW-0271">Exosome</keyword>
<keyword id="KW-1185">Reference proteome</keyword>
<accession>Q975G9</accession>
<accession>F9VMY9</accession>